<gene>
    <name type="primary">fosA</name>
    <name type="synonym">fos</name>
</gene>
<evidence type="ECO:0000255" key="1">
    <source>
        <dbReference type="PROSITE-ProRule" id="PRU01163"/>
    </source>
</evidence>
<evidence type="ECO:0000269" key="2">
    <source>
    </source>
</evidence>
<evidence type="ECO:0000269" key="3">
    <source>
    </source>
</evidence>
<evidence type="ECO:0000269" key="4">
    <source>
    </source>
</evidence>
<evidence type="ECO:0000305" key="5"/>
<evidence type="ECO:0007829" key="6">
    <source>
        <dbReference type="PDB" id="1NPB"/>
    </source>
</evidence>
<dbReference type="EC" id="2.5.1.18"/>
<dbReference type="EMBL" id="M85195">
    <property type="protein sequence ID" value="AAA98399.1"/>
    <property type="molecule type" value="Genomic_DNA"/>
</dbReference>
<dbReference type="RefSeq" id="WP_038415208.1">
    <property type="nucleotide sequence ID" value="NG_050405.1"/>
</dbReference>
<dbReference type="PDB" id="1NPB">
    <property type="method" value="X-ray"/>
    <property type="resolution" value="2.50 A"/>
    <property type="chains" value="A/B/C/D/E/F=1-141"/>
</dbReference>
<dbReference type="PDBsum" id="1NPB"/>
<dbReference type="SMR" id="Q56415"/>
<dbReference type="SABIO-RK" id="Q56415"/>
<dbReference type="EvolutionaryTrace" id="Q56415"/>
<dbReference type="GO" id="GO:0005737">
    <property type="term" value="C:cytoplasm"/>
    <property type="evidence" value="ECO:0007669"/>
    <property type="project" value="UniProtKB-SubCell"/>
</dbReference>
<dbReference type="GO" id="GO:0004364">
    <property type="term" value="F:glutathione transferase activity"/>
    <property type="evidence" value="ECO:0007669"/>
    <property type="project" value="UniProtKB-EC"/>
</dbReference>
<dbReference type="GO" id="GO:0046872">
    <property type="term" value="F:metal ion binding"/>
    <property type="evidence" value="ECO:0007669"/>
    <property type="project" value="UniProtKB-KW"/>
</dbReference>
<dbReference type="GO" id="GO:0046677">
    <property type="term" value="P:response to antibiotic"/>
    <property type="evidence" value="ECO:0007669"/>
    <property type="project" value="UniProtKB-KW"/>
</dbReference>
<dbReference type="CDD" id="cd07244">
    <property type="entry name" value="FosA"/>
    <property type="match status" value="1"/>
</dbReference>
<dbReference type="Gene3D" id="3.10.180.10">
    <property type="entry name" value="2,3-Dihydroxybiphenyl 1,2-Dioxygenase, domain 1"/>
    <property type="match status" value="1"/>
</dbReference>
<dbReference type="InterPro" id="IPR051332">
    <property type="entry name" value="Fosfomycin_Res_Enzymes"/>
</dbReference>
<dbReference type="InterPro" id="IPR029068">
    <property type="entry name" value="Glyas_Bleomycin-R_OHBP_Dase"/>
</dbReference>
<dbReference type="InterPro" id="IPR004360">
    <property type="entry name" value="Glyas_Fos-R_dOase_dom"/>
</dbReference>
<dbReference type="InterPro" id="IPR037523">
    <property type="entry name" value="VOC"/>
</dbReference>
<dbReference type="NCBIfam" id="NF000026">
    <property type="entry name" value="154989_fosA"/>
    <property type="match status" value="1"/>
</dbReference>
<dbReference type="NCBIfam" id="NF000496">
    <property type="entry name" value="Fos_GSH"/>
    <property type="match status" value="1"/>
</dbReference>
<dbReference type="NCBIfam" id="NF000221">
    <property type="entry name" value="FosA"/>
    <property type="match status" value="1"/>
</dbReference>
<dbReference type="PANTHER" id="PTHR36113:SF6">
    <property type="entry name" value="FOSFOMYCIN RESISTANCE PROTEIN FOSX"/>
    <property type="match status" value="1"/>
</dbReference>
<dbReference type="PANTHER" id="PTHR36113">
    <property type="entry name" value="LYASE, PUTATIVE-RELATED-RELATED"/>
    <property type="match status" value="1"/>
</dbReference>
<dbReference type="Pfam" id="PF00903">
    <property type="entry name" value="Glyoxalase"/>
    <property type="match status" value="1"/>
</dbReference>
<dbReference type="SUPFAM" id="SSF54593">
    <property type="entry name" value="Glyoxalase/Bleomycin resistance protein/Dihydroxybiphenyl dioxygenase"/>
    <property type="match status" value="1"/>
</dbReference>
<dbReference type="PROSITE" id="PS51819">
    <property type="entry name" value="VOC"/>
    <property type="match status" value="1"/>
</dbReference>
<keyword id="KW-0002">3D-structure</keyword>
<keyword id="KW-0046">Antibiotic resistance</keyword>
<keyword id="KW-0963">Cytoplasm</keyword>
<keyword id="KW-0464">Manganese</keyword>
<keyword id="KW-0479">Metal-binding</keyword>
<keyword id="KW-0630">Potassium</keyword>
<keyword id="KW-0808">Transferase</keyword>
<feature type="chain" id="PRO_0000164044" description="Glutathione transferase FosA">
    <location>
        <begin position="1"/>
        <end position="141"/>
    </location>
</feature>
<feature type="domain" description="VOC" evidence="1">
    <location>
        <begin position="4"/>
        <end position="117"/>
    </location>
</feature>
<feature type="binding site">
    <location>
        <position position="7"/>
    </location>
    <ligand>
        <name>Mn(2+)</name>
        <dbReference type="ChEBI" id="CHEBI:29035"/>
    </ligand>
</feature>
<feature type="binding site">
    <location>
        <position position="67"/>
    </location>
    <ligand>
        <name>Mn(2+)</name>
        <dbReference type="ChEBI" id="CHEBI:29035"/>
    </ligand>
</feature>
<feature type="binding site">
    <location>
        <position position="113"/>
    </location>
    <ligand>
        <name>Mn(2+)</name>
        <dbReference type="ChEBI" id="CHEBI:29035"/>
    </ligand>
</feature>
<feature type="mutagenesis site" description="Strong decrease in fosfomycin resistance." evidence="2">
    <original>H</original>
    <variation>A</variation>
    <location>
        <position position="7"/>
    </location>
</feature>
<feature type="mutagenesis site" description="Decrease in fosfomycin resistance." evidence="2">
    <original>H</original>
    <variation>Q</variation>
    <location>
        <position position="7"/>
    </location>
</feature>
<feature type="mutagenesis site" description="Loss of fosfomycin resistance." evidence="2">
    <original>H</original>
    <variation>A</variation>
    <location>
        <position position="67"/>
    </location>
</feature>
<feature type="mutagenesis site" description="Decrease in fosfomycin resistance." evidence="2">
    <original>H</original>
    <variation>Q</variation>
    <location>
        <position position="67"/>
    </location>
</feature>
<feature type="mutagenesis site" description="Strong decrease in fosfomycin resistance." evidence="2">
    <original>E</original>
    <variation>A</variation>
    <location>
        <position position="113"/>
    </location>
</feature>
<feature type="mutagenesis site" description="Decrease in fosfomycin resistance." evidence="2">
    <original>E</original>
    <variation>Q</variation>
    <location>
        <position position="113"/>
    </location>
</feature>
<feature type="strand" evidence="6">
    <location>
        <begin position="4"/>
        <end position="13"/>
    </location>
</feature>
<feature type="helix" evidence="6">
    <location>
        <begin position="15"/>
        <end position="23"/>
    </location>
</feature>
<feature type="strand" evidence="6">
    <location>
        <begin position="29"/>
        <end position="34"/>
    </location>
</feature>
<feature type="strand" evidence="6">
    <location>
        <begin position="37"/>
        <end position="42"/>
    </location>
</feature>
<feature type="strand" evidence="6">
    <location>
        <begin position="45"/>
        <end position="51"/>
    </location>
</feature>
<feature type="helix" evidence="6">
    <location>
        <begin position="60"/>
        <end position="62"/>
    </location>
</feature>
<feature type="strand" evidence="6">
    <location>
        <begin position="67"/>
        <end position="71"/>
    </location>
</feature>
<feature type="turn" evidence="6">
    <location>
        <begin position="74"/>
        <end position="76"/>
    </location>
</feature>
<feature type="helix" evidence="6">
    <location>
        <begin position="77"/>
        <end position="86"/>
    </location>
</feature>
<feature type="strand" evidence="6">
    <location>
        <begin position="91"/>
        <end position="93"/>
    </location>
</feature>
<feature type="strand" evidence="6">
    <location>
        <begin position="97"/>
        <end position="105"/>
    </location>
</feature>
<feature type="strand" evidence="6">
    <location>
        <begin position="111"/>
        <end position="116"/>
    </location>
</feature>
<feature type="helix" evidence="6">
    <location>
        <begin position="119"/>
        <end position="128"/>
    </location>
</feature>
<feature type="strand" evidence="6">
    <location>
        <begin position="135"/>
        <end position="137"/>
    </location>
</feature>
<proteinExistence type="evidence at protein level"/>
<sequence>MLQSLNHLTLAVSDLQKSVTFWHELLGLTLHARWNTGAYLTCGDLWVCLSYDEARQYVPPQESDYTHYAFTVAEEDFEPLSQRLEQAGVTIWKQNKSEGASFYFLDPDGHKLELHVGSLAARLAACREKPYAGMVFTSDEA</sequence>
<accession>Q56415</accession>
<reference key="1">
    <citation type="journal article" date="1990" name="Antimicrob. Agents Chemother.">
        <title>Nucleotide sequence and intracellular location of the product of the fosfomycin resistance gene from transposon Tn2921.</title>
        <authorList>
            <person name="Navas J."/>
            <person name="Leon J."/>
            <person name="Arroyo M."/>
            <person name="Garcia Lobo J.M."/>
        </authorList>
    </citation>
    <scope>NUCLEOTIDE SEQUENCE [GENOMIC DNA]</scope>
    <scope>SUBCELLULAR LOCATION</scope>
    <source>
        <transposon>Tn2921</transposon>
    </source>
</reference>
<reference key="2">
    <citation type="journal article" date="1997" name="Biochemistry">
        <title>Fosfomycin resistance protein (FosA) is a manganese metalloglutathione transferase related to glyoxalase I and the extradiol dioxygenases.</title>
        <authorList>
            <person name="Bernat B.A."/>
            <person name="Laughlin L.T."/>
            <person name="Armstrong R.N."/>
        </authorList>
    </citation>
    <scope>FUNCTION</scope>
    <scope>COFACTOR</scope>
    <scope>SUBUNIT</scope>
</reference>
<reference key="3">
    <citation type="journal article" date="1999" name="Biochemistry">
        <title>Elucidation of a monovalent cation dependence and characterization of the divalent cation binding site of the fosfomycin resistance protein (FosA).</title>
        <authorList>
            <person name="Bernat B.A."/>
            <person name="Laughlin L.T."/>
            <person name="Armstrong R.N."/>
        </authorList>
    </citation>
    <scope>METAL-BINDING SITES</scope>
    <scope>MUTAGENESIS OF HIS-7; HIS-67 AND GLU-113</scope>
</reference>
<organism>
    <name type="scientific">Serratia marcescens</name>
    <dbReference type="NCBI Taxonomy" id="615"/>
    <lineage>
        <taxon>Bacteria</taxon>
        <taxon>Pseudomonadati</taxon>
        <taxon>Pseudomonadota</taxon>
        <taxon>Gammaproteobacteria</taxon>
        <taxon>Enterobacterales</taxon>
        <taxon>Yersiniaceae</taxon>
        <taxon>Serratia</taxon>
    </lineage>
</organism>
<name>FOSA_SERMA</name>
<comment type="function">
    <text evidence="4">Metalloglutathione transferase which confers resistance to fosfomycin by catalyzing the addition of glutathione to fosfomycin.</text>
</comment>
<comment type="catalytic activity">
    <reaction>
        <text>RX + glutathione = an S-substituted glutathione + a halide anion + H(+)</text>
        <dbReference type="Rhea" id="RHEA:16437"/>
        <dbReference type="ChEBI" id="CHEBI:15378"/>
        <dbReference type="ChEBI" id="CHEBI:16042"/>
        <dbReference type="ChEBI" id="CHEBI:17792"/>
        <dbReference type="ChEBI" id="CHEBI:57925"/>
        <dbReference type="ChEBI" id="CHEBI:90779"/>
        <dbReference type="EC" id="2.5.1.18"/>
    </reaction>
</comment>
<comment type="cofactor">
    <cofactor evidence="4">
        <name>Mn(2+)</name>
        <dbReference type="ChEBI" id="CHEBI:29035"/>
    </cofactor>
</comment>
<comment type="activity regulation">
    <text>Requires the monovalent cation K(+) for optimal activity.</text>
</comment>
<comment type="subunit">
    <text evidence="4">Homodimer.</text>
</comment>
<comment type="subcellular location">
    <subcellularLocation>
        <location evidence="3">Cytoplasm</location>
    </subcellularLocation>
</comment>
<comment type="similarity">
    <text evidence="5">Belongs to the fosfomycin resistance protein family.</text>
</comment>
<protein>
    <recommendedName>
        <fullName>Glutathione transferase FosA</fullName>
        <ecNumber>2.5.1.18</ecNumber>
    </recommendedName>
    <alternativeName>
        <fullName>Fosfomycin resistance protein</fullName>
    </alternativeName>
</protein>